<name>VLTF1_VACCA</name>
<accession>O57198</accession>
<gene>
    <name type="primary">OPG093</name>
    <name type="synonym">VLTF1</name>
    <name type="ordered locus">MVA078R</name>
    <name type="ordered locus">ACAM3000_MVA_078</name>
    <name type="ORF">G8R</name>
</gene>
<organism>
    <name type="scientific">Vaccinia virus (strain Ankara)</name>
    <name type="common">VACV</name>
    <dbReference type="NCBI Taxonomy" id="126794"/>
    <lineage>
        <taxon>Viruses</taxon>
        <taxon>Varidnaviria</taxon>
        <taxon>Bamfordvirae</taxon>
        <taxon>Nucleocytoviricota</taxon>
        <taxon>Pokkesviricetes</taxon>
        <taxon>Chitovirales</taxon>
        <taxon>Poxviridae</taxon>
        <taxon>Chordopoxvirinae</taxon>
        <taxon>Orthopoxvirus</taxon>
        <taxon>Vaccinia virus</taxon>
    </lineage>
</organism>
<reference key="1">
    <citation type="journal article" date="1998" name="Virology">
        <title>The complete genomic sequence of the modified vaccinia Ankara strain: comparison with other orthopoxviruses.</title>
        <authorList>
            <person name="Antoine G."/>
            <person name="Scheiflinger F."/>
            <person name="Dorner F."/>
            <person name="Falkner F.G."/>
        </authorList>
    </citation>
    <scope>NUCLEOTIDE SEQUENCE [LARGE SCALE GENOMIC DNA]</scope>
</reference>
<reference key="2">
    <citation type="submission" date="2004-04" db="EMBL/GenBank/DDBJ databases">
        <authorList>
            <person name="Esposito J.J."/>
            <person name="Frace M."/>
            <person name="Sammons S.A."/>
            <person name="Olsen-Rasmussen M.S."/>
            <person name="Osborne J."/>
            <person name="Khristova M."/>
            <person name="Wohlhueter R.M."/>
        </authorList>
    </citation>
    <scope>NUCLEOTIDE SEQUENCE [LARGE SCALE GENOMIC DNA]</scope>
    <source>
        <strain>Isolate Acambis 3000</strain>
    </source>
</reference>
<dbReference type="EMBL" id="U94848">
    <property type="protein sequence ID" value="AAB96496.1"/>
    <property type="molecule type" value="Genomic_DNA"/>
</dbReference>
<dbReference type="EMBL" id="AY603355">
    <property type="protein sequence ID" value="AAT10476.1"/>
    <property type="molecule type" value="Genomic_DNA"/>
</dbReference>
<dbReference type="PIR" id="T37354">
    <property type="entry name" value="T37354"/>
</dbReference>
<dbReference type="Proteomes" id="UP000159908">
    <property type="component" value="Segment"/>
</dbReference>
<dbReference type="Proteomes" id="UP000172909">
    <property type="component" value="Segment"/>
</dbReference>
<dbReference type="GO" id="GO:0006355">
    <property type="term" value="P:regulation of DNA-templated transcription"/>
    <property type="evidence" value="ECO:0007669"/>
    <property type="project" value="InterPro"/>
</dbReference>
<dbReference type="InterPro" id="IPR005022">
    <property type="entry name" value="Pox_TAP"/>
</dbReference>
<dbReference type="Pfam" id="PF03355">
    <property type="entry name" value="Pox_TAP"/>
    <property type="match status" value="1"/>
</dbReference>
<protein>
    <recommendedName>
        <fullName>Late transcription factor 1</fullName>
        <shortName>VLTF-1</shortName>
    </recommendedName>
    <alternativeName>
        <fullName>Trans-activator protein GK1</fullName>
    </alternativeName>
</protein>
<proteinExistence type="evidence at transcript level"/>
<keyword id="KW-0010">Activator</keyword>
<keyword id="KW-0426">Late protein</keyword>
<keyword id="KW-0804">Transcription</keyword>
<keyword id="KW-0805">Transcription regulation</keyword>
<feature type="chain" id="PRO_0000099165" description="Late transcription factor 1">
    <location>
        <begin position="1"/>
        <end position="260"/>
    </location>
</feature>
<sequence length="260" mass="29941">MSIRIKIDKLRQIVAYFSEFSEEVSINVDSTDELMYIFAALGGSVNIWAIIPLSASVFYRGAENIVFNLPVSKVKSCLCSFHNDAIIDIEPDLENNLVKLSSYHVVSVDCNKELMPIRTDTTICLSIDQKKSYVFNFHKYEEKCCGRTVIHLEWLLGFIKCISQHQHLAIMFKDDNIIMKTPGNTDAFSREYSMTECSQELQKFSFKIAISSLNKLRGFKKRVNVFETRIVMDNDDNILGMLFSDRVQSFKINIFMTFLD</sequence>
<comment type="function">
    <text evidence="1">Associates with RNA polymerase to initiate transcription from late gene promoters.</text>
</comment>
<comment type="subunit">
    <text evidence="1">Interacts with the late transcription factors VLTF-2 and VLTF-3. Interacts with the late transcription elongation factor VLTF-4. Interacts with itself.</text>
</comment>
<comment type="induction">
    <text>Expressed in the intermediate phase of the viral replicative cycle.</text>
</comment>
<comment type="similarity">
    <text evidence="2">Belongs to the chordopoxvirinae VLTF-1 family.</text>
</comment>
<evidence type="ECO:0000250" key="1">
    <source>
        <dbReference type="UniProtKB" id="P68613"/>
    </source>
</evidence>
<evidence type="ECO:0000305" key="2"/>
<organismHost>
    <name type="scientific">Homo sapiens</name>
    <name type="common">Human</name>
    <dbReference type="NCBI Taxonomy" id="9606"/>
</organismHost>